<gene>
    <name evidence="1" type="primary">grpE</name>
    <name type="ordered locus">ECP_2614</name>
</gene>
<reference key="1">
    <citation type="journal article" date="2006" name="Mol. Microbiol.">
        <title>Role of pathogenicity island-associated integrases in the genome plasticity of uropathogenic Escherichia coli strain 536.</title>
        <authorList>
            <person name="Hochhut B."/>
            <person name="Wilde C."/>
            <person name="Balling G."/>
            <person name="Middendorf B."/>
            <person name="Dobrindt U."/>
            <person name="Brzuszkiewicz E."/>
            <person name="Gottschalk G."/>
            <person name="Carniel E."/>
            <person name="Hacker J."/>
        </authorList>
    </citation>
    <scope>NUCLEOTIDE SEQUENCE [LARGE SCALE GENOMIC DNA]</scope>
    <source>
        <strain>536 / UPEC</strain>
    </source>
</reference>
<keyword id="KW-0143">Chaperone</keyword>
<keyword id="KW-0963">Cytoplasm</keyword>
<keyword id="KW-0346">Stress response</keyword>
<name>GRPE_ECOL5</name>
<sequence length="197" mass="21812">MSSKEQKTPEGQAPEEIIMDQHEEIEAVEPEASAEQVDPRDEKIANLEAQLAEAQTRERDGILRVKAEMENLRRRTELDIEKAHKFALEKFINELLPVIDSLDRALEVADKANPDMSAMVEGIELTLKSMLDVVRKFGVEVIAETNVPLDPNVHQAIAMVESDDVAPGNVLGIMQKGYTLNGRTIRAAMVTVAKAKA</sequence>
<proteinExistence type="inferred from homology"/>
<accession>Q0TEM6</accession>
<evidence type="ECO:0000255" key="1">
    <source>
        <dbReference type="HAMAP-Rule" id="MF_01151"/>
    </source>
</evidence>
<evidence type="ECO:0000256" key="2">
    <source>
        <dbReference type="SAM" id="MobiDB-lite"/>
    </source>
</evidence>
<organism>
    <name type="scientific">Escherichia coli O6:K15:H31 (strain 536 / UPEC)</name>
    <dbReference type="NCBI Taxonomy" id="362663"/>
    <lineage>
        <taxon>Bacteria</taxon>
        <taxon>Pseudomonadati</taxon>
        <taxon>Pseudomonadota</taxon>
        <taxon>Gammaproteobacteria</taxon>
        <taxon>Enterobacterales</taxon>
        <taxon>Enterobacteriaceae</taxon>
        <taxon>Escherichia</taxon>
    </lineage>
</organism>
<feature type="chain" id="PRO_1000053575" description="Protein GrpE">
    <location>
        <begin position="1"/>
        <end position="197"/>
    </location>
</feature>
<feature type="region of interest" description="Disordered" evidence="2">
    <location>
        <begin position="1"/>
        <end position="39"/>
    </location>
</feature>
<comment type="function">
    <text evidence="1">Participates actively in the response to hyperosmotic and heat shock by preventing the aggregation of stress-denatured proteins, in association with DnaK and GrpE. It is the nucleotide exchange factor for DnaK and may function as a thermosensor. Unfolded proteins bind initially to DnaJ; upon interaction with the DnaJ-bound protein, DnaK hydrolyzes its bound ATP, resulting in the formation of a stable complex. GrpE releases ADP from DnaK; ATP binding to DnaK triggers the release of the substrate protein, thus completing the reaction cycle. Several rounds of ATP-dependent interactions between DnaJ, DnaK and GrpE are required for fully efficient folding.</text>
</comment>
<comment type="subunit">
    <text evidence="1">Homodimer.</text>
</comment>
<comment type="subcellular location">
    <subcellularLocation>
        <location evidence="1">Cytoplasm</location>
    </subcellularLocation>
</comment>
<comment type="similarity">
    <text evidence="1">Belongs to the GrpE family.</text>
</comment>
<protein>
    <recommendedName>
        <fullName evidence="1">Protein GrpE</fullName>
    </recommendedName>
    <alternativeName>
        <fullName evidence="1">HSP-70 cofactor</fullName>
    </alternativeName>
</protein>
<dbReference type="EMBL" id="CP000247">
    <property type="protein sequence ID" value="ABG70603.1"/>
    <property type="molecule type" value="Genomic_DNA"/>
</dbReference>
<dbReference type="RefSeq" id="WP_001296310.1">
    <property type="nucleotide sequence ID" value="NC_008253.1"/>
</dbReference>
<dbReference type="SMR" id="Q0TEM6"/>
<dbReference type="GeneID" id="93774463"/>
<dbReference type="KEGG" id="ecp:ECP_2614"/>
<dbReference type="HOGENOM" id="CLU_057217_6_0_6"/>
<dbReference type="Proteomes" id="UP000009182">
    <property type="component" value="Chromosome"/>
</dbReference>
<dbReference type="GO" id="GO:0005829">
    <property type="term" value="C:cytosol"/>
    <property type="evidence" value="ECO:0007669"/>
    <property type="project" value="TreeGrafter"/>
</dbReference>
<dbReference type="GO" id="GO:0000774">
    <property type="term" value="F:adenyl-nucleotide exchange factor activity"/>
    <property type="evidence" value="ECO:0007669"/>
    <property type="project" value="InterPro"/>
</dbReference>
<dbReference type="GO" id="GO:0042803">
    <property type="term" value="F:protein homodimerization activity"/>
    <property type="evidence" value="ECO:0007669"/>
    <property type="project" value="InterPro"/>
</dbReference>
<dbReference type="GO" id="GO:0051087">
    <property type="term" value="F:protein-folding chaperone binding"/>
    <property type="evidence" value="ECO:0007669"/>
    <property type="project" value="InterPro"/>
</dbReference>
<dbReference type="GO" id="GO:0051082">
    <property type="term" value="F:unfolded protein binding"/>
    <property type="evidence" value="ECO:0007669"/>
    <property type="project" value="TreeGrafter"/>
</dbReference>
<dbReference type="GO" id="GO:0006457">
    <property type="term" value="P:protein folding"/>
    <property type="evidence" value="ECO:0007669"/>
    <property type="project" value="InterPro"/>
</dbReference>
<dbReference type="CDD" id="cd00446">
    <property type="entry name" value="GrpE"/>
    <property type="match status" value="1"/>
</dbReference>
<dbReference type="FunFam" id="2.30.22.10:FF:000001">
    <property type="entry name" value="Protein GrpE"/>
    <property type="match status" value="1"/>
</dbReference>
<dbReference type="FunFam" id="3.90.20.20:FF:000001">
    <property type="entry name" value="Protein GrpE"/>
    <property type="match status" value="1"/>
</dbReference>
<dbReference type="Gene3D" id="3.90.20.20">
    <property type="match status" value="1"/>
</dbReference>
<dbReference type="Gene3D" id="2.30.22.10">
    <property type="entry name" value="Head domain of nucleotide exchange factor GrpE"/>
    <property type="match status" value="1"/>
</dbReference>
<dbReference type="HAMAP" id="MF_01151">
    <property type="entry name" value="GrpE"/>
    <property type="match status" value="1"/>
</dbReference>
<dbReference type="InterPro" id="IPR000740">
    <property type="entry name" value="GrpE"/>
</dbReference>
<dbReference type="InterPro" id="IPR013805">
    <property type="entry name" value="GrpE_coiled_coil"/>
</dbReference>
<dbReference type="InterPro" id="IPR009012">
    <property type="entry name" value="GrpE_head"/>
</dbReference>
<dbReference type="NCBIfam" id="NF007655">
    <property type="entry name" value="PRK10325.1"/>
    <property type="match status" value="1"/>
</dbReference>
<dbReference type="NCBIfam" id="NF010738">
    <property type="entry name" value="PRK14140.1"/>
    <property type="match status" value="1"/>
</dbReference>
<dbReference type="NCBIfam" id="NF010748">
    <property type="entry name" value="PRK14150.1"/>
    <property type="match status" value="1"/>
</dbReference>
<dbReference type="PANTHER" id="PTHR21237">
    <property type="entry name" value="GRPE PROTEIN"/>
    <property type="match status" value="1"/>
</dbReference>
<dbReference type="PANTHER" id="PTHR21237:SF23">
    <property type="entry name" value="GRPE PROTEIN HOMOLOG, MITOCHONDRIAL"/>
    <property type="match status" value="1"/>
</dbReference>
<dbReference type="Pfam" id="PF01025">
    <property type="entry name" value="GrpE"/>
    <property type="match status" value="1"/>
</dbReference>
<dbReference type="PRINTS" id="PR00773">
    <property type="entry name" value="GRPEPROTEIN"/>
</dbReference>
<dbReference type="SUPFAM" id="SSF58014">
    <property type="entry name" value="Coiled-coil domain of nucleotide exchange factor GrpE"/>
    <property type="match status" value="1"/>
</dbReference>
<dbReference type="SUPFAM" id="SSF51064">
    <property type="entry name" value="Head domain of nucleotide exchange factor GrpE"/>
    <property type="match status" value="1"/>
</dbReference>
<dbReference type="PROSITE" id="PS01071">
    <property type="entry name" value="GRPE"/>
    <property type="match status" value="1"/>
</dbReference>